<organism>
    <name type="scientific">Bacillus anthracis</name>
    <dbReference type="NCBI Taxonomy" id="1392"/>
    <lineage>
        <taxon>Bacteria</taxon>
        <taxon>Bacillati</taxon>
        <taxon>Bacillota</taxon>
        <taxon>Bacilli</taxon>
        <taxon>Bacillales</taxon>
        <taxon>Bacillaceae</taxon>
        <taxon>Bacillus</taxon>
        <taxon>Bacillus cereus group</taxon>
    </lineage>
</organism>
<protein>
    <recommendedName>
        <fullName evidence="1">Elongation factor G</fullName>
        <shortName evidence="1">EF-G</shortName>
    </recommendedName>
</protein>
<name>EFG_BACAN</name>
<dbReference type="EMBL" id="AE016879">
    <property type="protein sequence ID" value="AAP24161.1"/>
    <property type="molecule type" value="Genomic_DNA"/>
</dbReference>
<dbReference type="EMBL" id="AE017334">
    <property type="protein sequence ID" value="AAT29187.1"/>
    <property type="molecule type" value="Genomic_DNA"/>
</dbReference>
<dbReference type="EMBL" id="AE017225">
    <property type="protein sequence ID" value="AAT52444.1"/>
    <property type="molecule type" value="Genomic_DNA"/>
</dbReference>
<dbReference type="RefSeq" id="NP_842675.1">
    <property type="nucleotide sequence ID" value="NC_003997.3"/>
</dbReference>
<dbReference type="RefSeq" id="WP_000090364.1">
    <property type="nucleotide sequence ID" value="NZ_WXXJ01000051.1"/>
</dbReference>
<dbReference type="RefSeq" id="YP_026393.1">
    <property type="nucleotide sequence ID" value="NC_005945.1"/>
</dbReference>
<dbReference type="SMR" id="Q81VT3"/>
<dbReference type="IntAct" id="Q81VT3">
    <property type="interactions" value="10"/>
</dbReference>
<dbReference type="STRING" id="261594.GBAA_0107"/>
<dbReference type="DNASU" id="1086334"/>
<dbReference type="GeneID" id="45020152"/>
<dbReference type="KEGG" id="ban:BA_0107"/>
<dbReference type="KEGG" id="bar:GBAA_0107"/>
<dbReference type="KEGG" id="bat:BAS0107"/>
<dbReference type="PATRIC" id="fig|198094.11.peg.104"/>
<dbReference type="eggNOG" id="COG0480">
    <property type="taxonomic scope" value="Bacteria"/>
</dbReference>
<dbReference type="HOGENOM" id="CLU_002794_4_1_9"/>
<dbReference type="OMA" id="GQFAKVQ"/>
<dbReference type="OrthoDB" id="9804431at2"/>
<dbReference type="Proteomes" id="UP000000427">
    <property type="component" value="Chromosome"/>
</dbReference>
<dbReference type="Proteomes" id="UP000000594">
    <property type="component" value="Chromosome"/>
</dbReference>
<dbReference type="GO" id="GO:0005737">
    <property type="term" value="C:cytoplasm"/>
    <property type="evidence" value="ECO:0007669"/>
    <property type="project" value="UniProtKB-SubCell"/>
</dbReference>
<dbReference type="GO" id="GO:0005525">
    <property type="term" value="F:GTP binding"/>
    <property type="evidence" value="ECO:0007669"/>
    <property type="project" value="UniProtKB-UniRule"/>
</dbReference>
<dbReference type="GO" id="GO:0003924">
    <property type="term" value="F:GTPase activity"/>
    <property type="evidence" value="ECO:0007669"/>
    <property type="project" value="InterPro"/>
</dbReference>
<dbReference type="GO" id="GO:0003746">
    <property type="term" value="F:translation elongation factor activity"/>
    <property type="evidence" value="ECO:0007669"/>
    <property type="project" value="UniProtKB-UniRule"/>
</dbReference>
<dbReference type="GO" id="GO:0032790">
    <property type="term" value="P:ribosome disassembly"/>
    <property type="evidence" value="ECO:0007669"/>
    <property type="project" value="TreeGrafter"/>
</dbReference>
<dbReference type="CDD" id="cd01886">
    <property type="entry name" value="EF-G"/>
    <property type="match status" value="1"/>
</dbReference>
<dbReference type="CDD" id="cd16262">
    <property type="entry name" value="EFG_III"/>
    <property type="match status" value="1"/>
</dbReference>
<dbReference type="CDD" id="cd01434">
    <property type="entry name" value="EFG_mtEFG1_IV"/>
    <property type="match status" value="1"/>
</dbReference>
<dbReference type="CDD" id="cd03713">
    <property type="entry name" value="EFG_mtEFG_C"/>
    <property type="match status" value="1"/>
</dbReference>
<dbReference type="CDD" id="cd04088">
    <property type="entry name" value="EFG_mtEFG_II"/>
    <property type="match status" value="1"/>
</dbReference>
<dbReference type="FunFam" id="2.40.30.10:FF:000006">
    <property type="entry name" value="Elongation factor G"/>
    <property type="match status" value="1"/>
</dbReference>
<dbReference type="FunFam" id="3.30.230.10:FF:000003">
    <property type="entry name" value="Elongation factor G"/>
    <property type="match status" value="1"/>
</dbReference>
<dbReference type="FunFam" id="3.30.70.240:FF:000001">
    <property type="entry name" value="Elongation factor G"/>
    <property type="match status" value="1"/>
</dbReference>
<dbReference type="FunFam" id="3.30.70.870:FF:000001">
    <property type="entry name" value="Elongation factor G"/>
    <property type="match status" value="1"/>
</dbReference>
<dbReference type="FunFam" id="3.40.50.300:FF:000029">
    <property type="entry name" value="Elongation factor G"/>
    <property type="match status" value="1"/>
</dbReference>
<dbReference type="Gene3D" id="3.30.230.10">
    <property type="match status" value="1"/>
</dbReference>
<dbReference type="Gene3D" id="3.30.70.240">
    <property type="match status" value="1"/>
</dbReference>
<dbReference type="Gene3D" id="3.30.70.870">
    <property type="entry name" value="Elongation Factor G (Translational Gtpase), domain 3"/>
    <property type="match status" value="1"/>
</dbReference>
<dbReference type="Gene3D" id="3.40.50.300">
    <property type="entry name" value="P-loop containing nucleotide triphosphate hydrolases"/>
    <property type="match status" value="1"/>
</dbReference>
<dbReference type="Gene3D" id="2.40.30.10">
    <property type="entry name" value="Translation factors"/>
    <property type="match status" value="1"/>
</dbReference>
<dbReference type="HAMAP" id="MF_00054_B">
    <property type="entry name" value="EF_G_EF_2_B"/>
    <property type="match status" value="1"/>
</dbReference>
<dbReference type="InterPro" id="IPR041095">
    <property type="entry name" value="EFG_II"/>
</dbReference>
<dbReference type="InterPro" id="IPR009022">
    <property type="entry name" value="EFG_III"/>
</dbReference>
<dbReference type="InterPro" id="IPR035647">
    <property type="entry name" value="EFG_III/V"/>
</dbReference>
<dbReference type="InterPro" id="IPR047872">
    <property type="entry name" value="EFG_IV"/>
</dbReference>
<dbReference type="InterPro" id="IPR035649">
    <property type="entry name" value="EFG_V"/>
</dbReference>
<dbReference type="InterPro" id="IPR000640">
    <property type="entry name" value="EFG_V-like"/>
</dbReference>
<dbReference type="InterPro" id="IPR004161">
    <property type="entry name" value="EFTu-like_2"/>
</dbReference>
<dbReference type="InterPro" id="IPR031157">
    <property type="entry name" value="G_TR_CS"/>
</dbReference>
<dbReference type="InterPro" id="IPR027417">
    <property type="entry name" value="P-loop_NTPase"/>
</dbReference>
<dbReference type="InterPro" id="IPR020568">
    <property type="entry name" value="Ribosomal_Su5_D2-typ_SF"/>
</dbReference>
<dbReference type="InterPro" id="IPR014721">
    <property type="entry name" value="Ribsml_uS5_D2-typ_fold_subgr"/>
</dbReference>
<dbReference type="InterPro" id="IPR005225">
    <property type="entry name" value="Small_GTP-bd"/>
</dbReference>
<dbReference type="InterPro" id="IPR000795">
    <property type="entry name" value="T_Tr_GTP-bd_dom"/>
</dbReference>
<dbReference type="InterPro" id="IPR009000">
    <property type="entry name" value="Transl_B-barrel_sf"/>
</dbReference>
<dbReference type="InterPro" id="IPR004540">
    <property type="entry name" value="Transl_elong_EFG/EF2"/>
</dbReference>
<dbReference type="InterPro" id="IPR005517">
    <property type="entry name" value="Transl_elong_EFG/EF2_IV"/>
</dbReference>
<dbReference type="NCBIfam" id="TIGR00484">
    <property type="entry name" value="EF-G"/>
    <property type="match status" value="1"/>
</dbReference>
<dbReference type="NCBIfam" id="NF009379">
    <property type="entry name" value="PRK12740.1-3"/>
    <property type="match status" value="1"/>
</dbReference>
<dbReference type="NCBIfam" id="NF009381">
    <property type="entry name" value="PRK12740.1-5"/>
    <property type="match status" value="1"/>
</dbReference>
<dbReference type="NCBIfam" id="NF009891">
    <property type="entry name" value="PRK13351.1-1"/>
    <property type="match status" value="1"/>
</dbReference>
<dbReference type="NCBIfam" id="TIGR00231">
    <property type="entry name" value="small_GTP"/>
    <property type="match status" value="1"/>
</dbReference>
<dbReference type="PANTHER" id="PTHR43261:SF1">
    <property type="entry name" value="RIBOSOME-RELEASING FACTOR 2, MITOCHONDRIAL"/>
    <property type="match status" value="1"/>
</dbReference>
<dbReference type="PANTHER" id="PTHR43261">
    <property type="entry name" value="TRANSLATION ELONGATION FACTOR G-RELATED"/>
    <property type="match status" value="1"/>
</dbReference>
<dbReference type="Pfam" id="PF00679">
    <property type="entry name" value="EFG_C"/>
    <property type="match status" value="1"/>
</dbReference>
<dbReference type="Pfam" id="PF14492">
    <property type="entry name" value="EFG_III"/>
    <property type="match status" value="1"/>
</dbReference>
<dbReference type="Pfam" id="PF03764">
    <property type="entry name" value="EFG_IV"/>
    <property type="match status" value="1"/>
</dbReference>
<dbReference type="Pfam" id="PF00009">
    <property type="entry name" value="GTP_EFTU"/>
    <property type="match status" value="1"/>
</dbReference>
<dbReference type="Pfam" id="PF03144">
    <property type="entry name" value="GTP_EFTU_D2"/>
    <property type="match status" value="1"/>
</dbReference>
<dbReference type="PRINTS" id="PR00315">
    <property type="entry name" value="ELONGATNFCT"/>
</dbReference>
<dbReference type="SMART" id="SM00838">
    <property type="entry name" value="EFG_C"/>
    <property type="match status" value="1"/>
</dbReference>
<dbReference type="SMART" id="SM00889">
    <property type="entry name" value="EFG_IV"/>
    <property type="match status" value="1"/>
</dbReference>
<dbReference type="SUPFAM" id="SSF54980">
    <property type="entry name" value="EF-G C-terminal domain-like"/>
    <property type="match status" value="2"/>
</dbReference>
<dbReference type="SUPFAM" id="SSF52540">
    <property type="entry name" value="P-loop containing nucleoside triphosphate hydrolases"/>
    <property type="match status" value="1"/>
</dbReference>
<dbReference type="SUPFAM" id="SSF54211">
    <property type="entry name" value="Ribosomal protein S5 domain 2-like"/>
    <property type="match status" value="1"/>
</dbReference>
<dbReference type="SUPFAM" id="SSF50447">
    <property type="entry name" value="Translation proteins"/>
    <property type="match status" value="1"/>
</dbReference>
<dbReference type="PROSITE" id="PS00301">
    <property type="entry name" value="G_TR_1"/>
    <property type="match status" value="1"/>
</dbReference>
<dbReference type="PROSITE" id="PS51722">
    <property type="entry name" value="G_TR_2"/>
    <property type="match status" value="1"/>
</dbReference>
<reference key="1">
    <citation type="journal article" date="2003" name="Nature">
        <title>The genome sequence of Bacillus anthracis Ames and comparison to closely related bacteria.</title>
        <authorList>
            <person name="Read T.D."/>
            <person name="Peterson S.N."/>
            <person name="Tourasse N.J."/>
            <person name="Baillie L.W."/>
            <person name="Paulsen I.T."/>
            <person name="Nelson K.E."/>
            <person name="Tettelin H."/>
            <person name="Fouts D.E."/>
            <person name="Eisen J.A."/>
            <person name="Gill S.R."/>
            <person name="Holtzapple E.K."/>
            <person name="Okstad O.A."/>
            <person name="Helgason E."/>
            <person name="Rilstone J."/>
            <person name="Wu M."/>
            <person name="Kolonay J.F."/>
            <person name="Beanan M.J."/>
            <person name="Dodson R.J."/>
            <person name="Brinkac L.M."/>
            <person name="Gwinn M.L."/>
            <person name="DeBoy R.T."/>
            <person name="Madpu R."/>
            <person name="Daugherty S.C."/>
            <person name="Durkin A.S."/>
            <person name="Haft D.H."/>
            <person name="Nelson W.C."/>
            <person name="Peterson J.D."/>
            <person name="Pop M."/>
            <person name="Khouri H.M."/>
            <person name="Radune D."/>
            <person name="Benton J.L."/>
            <person name="Mahamoud Y."/>
            <person name="Jiang L."/>
            <person name="Hance I.R."/>
            <person name="Weidman J.F."/>
            <person name="Berry K.J."/>
            <person name="Plaut R.D."/>
            <person name="Wolf A.M."/>
            <person name="Watkins K.L."/>
            <person name="Nierman W.C."/>
            <person name="Hazen A."/>
            <person name="Cline R.T."/>
            <person name="Redmond C."/>
            <person name="Thwaite J.E."/>
            <person name="White O."/>
            <person name="Salzberg S.L."/>
            <person name="Thomason B."/>
            <person name="Friedlander A.M."/>
            <person name="Koehler T.M."/>
            <person name="Hanna P.C."/>
            <person name="Kolstoe A.-B."/>
            <person name="Fraser C.M."/>
        </authorList>
    </citation>
    <scope>NUCLEOTIDE SEQUENCE [LARGE SCALE GENOMIC DNA]</scope>
    <source>
        <strain>Ames / isolate Porton</strain>
    </source>
</reference>
<reference key="2">
    <citation type="journal article" date="2009" name="J. Bacteriol.">
        <title>The complete genome sequence of Bacillus anthracis Ames 'Ancestor'.</title>
        <authorList>
            <person name="Ravel J."/>
            <person name="Jiang L."/>
            <person name="Stanley S.T."/>
            <person name="Wilson M.R."/>
            <person name="Decker R.S."/>
            <person name="Read T.D."/>
            <person name="Worsham P."/>
            <person name="Keim P.S."/>
            <person name="Salzberg S.L."/>
            <person name="Fraser-Liggett C.M."/>
            <person name="Rasko D.A."/>
        </authorList>
    </citation>
    <scope>NUCLEOTIDE SEQUENCE [LARGE SCALE GENOMIC DNA]</scope>
    <source>
        <strain>Ames ancestor</strain>
    </source>
</reference>
<reference key="3">
    <citation type="submission" date="2004-01" db="EMBL/GenBank/DDBJ databases">
        <title>Complete genome sequence of Bacillus anthracis Sterne.</title>
        <authorList>
            <person name="Brettin T.S."/>
            <person name="Bruce D."/>
            <person name="Challacombe J.F."/>
            <person name="Gilna P."/>
            <person name="Han C."/>
            <person name="Hill K."/>
            <person name="Hitchcock P."/>
            <person name="Jackson P."/>
            <person name="Keim P."/>
            <person name="Longmire J."/>
            <person name="Lucas S."/>
            <person name="Okinaka R."/>
            <person name="Richardson P."/>
            <person name="Rubin E."/>
            <person name="Tice H."/>
        </authorList>
    </citation>
    <scope>NUCLEOTIDE SEQUENCE [LARGE SCALE GENOMIC DNA]</scope>
    <source>
        <strain>Sterne</strain>
    </source>
</reference>
<keyword id="KW-0963">Cytoplasm</keyword>
<keyword id="KW-0251">Elongation factor</keyword>
<keyword id="KW-0342">GTP-binding</keyword>
<keyword id="KW-0547">Nucleotide-binding</keyword>
<keyword id="KW-0648">Protein biosynthesis</keyword>
<keyword id="KW-1185">Reference proteome</keyword>
<accession>Q81VT3</accession>
<accession>Q6I4T7</accession>
<accession>Q6KYI3</accession>
<sequence length="692" mass="76336">MAREFSLENTRNIGIMAHIDAGKTTATERILYYTGRIHKIGETHEGASQMDWMEQEQERGITITSAATTAQWKGHRVNIIDTPGHVDFTVEVERSLRVLDGAVAVLDAQSGVEPQTETVWRQATTYGVPRIVFVNKMDKIGADFLYSVGTIHDRLQANAHPIQLPIGAEDEFNGIIDLVEECAYMYGNDLGTDIQRVEIPEEHKELAEEYRGKLIEAVAELDEEMMMKYLEGEEITVEELKAGIRKATTSVEFFPVICGSAFKNKGVQILLDAVIDYLPSPLDVPAIKGIVPDTDEEVERKSSDEEPFAALAFKIMTDPYVGKLTFFRVYSGVLNSGSYVKNSTKGKRERVGRILQMHANSREEISTVYAGDIAAAVGLKDTTTGDTLCDEKSLVILESMEFPEPVISVAIEPKSKADQDKMGTALSKLSEEDPTFRAHTDQETGQTIIAGMGELHLDIIVDRMRREFKVEANVGAPQVAYRETFRAAAKVEGKFARQSGGRGQFGHVWIEFEPNEEGKGFEFENKIVGGVVPREYIPAVGAGLEDALKNGVLAGYPVVDIKAALVDGSYHDVDSSEMAFKIAASMALKAAVSKCNPVILEPMMKVEVVIPEEYMGDIMGDVTSRRGRVEGMEARGNAQVVRAMVPLSEMFGYATSLRSNTQGRGTFSMVFDHYEEVPKSVSEEIIKKNKGE</sequence>
<comment type="function">
    <text evidence="1">Catalyzes the GTP-dependent ribosomal translocation step during translation elongation. During this step, the ribosome changes from the pre-translocational (PRE) to the post-translocational (POST) state as the newly formed A-site-bound peptidyl-tRNA and P-site-bound deacylated tRNA move to the P and E sites, respectively. Catalyzes the coordinated movement of the two tRNA molecules, the mRNA and conformational changes in the ribosome.</text>
</comment>
<comment type="subcellular location">
    <subcellularLocation>
        <location evidence="1">Cytoplasm</location>
    </subcellularLocation>
</comment>
<comment type="similarity">
    <text evidence="1">Belongs to the TRAFAC class translation factor GTPase superfamily. Classic translation factor GTPase family. EF-G/EF-2 subfamily.</text>
</comment>
<gene>
    <name evidence="1" type="primary">fusA</name>
    <name type="ordered locus">BA_0107</name>
    <name type="ordered locus">GBAA_0107</name>
    <name type="ordered locus">BAS0107</name>
</gene>
<proteinExistence type="inferred from homology"/>
<evidence type="ECO:0000255" key="1">
    <source>
        <dbReference type="HAMAP-Rule" id="MF_00054"/>
    </source>
</evidence>
<feature type="chain" id="PRO_0000091061" description="Elongation factor G">
    <location>
        <begin position="1"/>
        <end position="692"/>
    </location>
</feature>
<feature type="domain" description="tr-type G">
    <location>
        <begin position="8"/>
        <end position="282"/>
    </location>
</feature>
<feature type="binding site" evidence="1">
    <location>
        <begin position="17"/>
        <end position="24"/>
    </location>
    <ligand>
        <name>GTP</name>
        <dbReference type="ChEBI" id="CHEBI:37565"/>
    </ligand>
</feature>
<feature type="binding site" evidence="1">
    <location>
        <begin position="81"/>
        <end position="85"/>
    </location>
    <ligand>
        <name>GTP</name>
        <dbReference type="ChEBI" id="CHEBI:37565"/>
    </ligand>
</feature>
<feature type="binding site" evidence="1">
    <location>
        <begin position="135"/>
        <end position="138"/>
    </location>
    <ligand>
        <name>GTP</name>
        <dbReference type="ChEBI" id="CHEBI:37565"/>
    </ligand>
</feature>